<reference key="1">
    <citation type="submission" date="2012-05" db="EMBL/GenBank/DDBJ databases">
        <authorList>
            <person name="Krishnakumar V."/>
            <person name="Cheung F."/>
            <person name="Xiao Y."/>
            <person name="Chan A."/>
            <person name="Moskal W.A."/>
            <person name="Town C.D."/>
        </authorList>
    </citation>
    <scope>NUCLEOTIDE SEQUENCE [MRNA]</scope>
</reference>
<reference key="2">
    <citation type="journal article" date="2011" name="Nature">
        <title>The Medicago genome provides insight into the evolution of rhizobial symbioses.</title>
        <authorList>
            <person name="Young N.D."/>
            <person name="Debelle F."/>
            <person name="Oldroyd G.E.D."/>
            <person name="Geurts R."/>
            <person name="Cannon S.B."/>
            <person name="Udvardi M.K."/>
            <person name="Benedito V.A."/>
            <person name="Mayer K.F.X."/>
            <person name="Gouzy J."/>
            <person name="Schoof H."/>
            <person name="Van de Peer Y."/>
            <person name="Proost S."/>
            <person name="Cook D.R."/>
            <person name="Meyers B.C."/>
            <person name="Spannagl M."/>
            <person name="Cheung F."/>
            <person name="De Mita S."/>
            <person name="Krishnakumar V."/>
            <person name="Gundlach H."/>
            <person name="Zhou S."/>
            <person name="Mudge J."/>
            <person name="Bharti A.K."/>
            <person name="Murray J.D."/>
            <person name="Naoumkina M.A."/>
            <person name="Rosen B."/>
            <person name="Silverstein K.A.T."/>
            <person name="Tang H."/>
            <person name="Rombauts S."/>
            <person name="Zhao P.X."/>
            <person name="Zhou P."/>
            <person name="Barbe V."/>
            <person name="Bardou P."/>
            <person name="Bechner M."/>
            <person name="Bellec A."/>
            <person name="Berger A."/>
            <person name="Berges H."/>
            <person name="Bidwell S."/>
            <person name="Bisseling T."/>
            <person name="Choisne N."/>
            <person name="Couloux A."/>
            <person name="Denny R."/>
            <person name="Deshpande S."/>
            <person name="Dai X."/>
            <person name="Doyle J.J."/>
            <person name="Dudez A.-M."/>
            <person name="Farmer A.D."/>
            <person name="Fouteau S."/>
            <person name="Franken C."/>
            <person name="Gibelin C."/>
            <person name="Gish J."/>
            <person name="Goldstein S."/>
            <person name="Gonzalez A.J."/>
            <person name="Green P.J."/>
            <person name="Hallab A."/>
            <person name="Hartog M."/>
            <person name="Hua A."/>
            <person name="Humphray S.J."/>
            <person name="Jeong D.-H."/>
            <person name="Jing Y."/>
            <person name="Jocker A."/>
            <person name="Kenton S.M."/>
            <person name="Kim D.-J."/>
            <person name="Klee K."/>
            <person name="Lai H."/>
            <person name="Lang C."/>
            <person name="Lin S."/>
            <person name="Macmil S.L."/>
            <person name="Magdelenat G."/>
            <person name="Matthews L."/>
            <person name="McCorrison J."/>
            <person name="Monaghan E.L."/>
            <person name="Mun J.-H."/>
            <person name="Najar F.Z."/>
            <person name="Nicholson C."/>
            <person name="Noirot C."/>
            <person name="O'Bleness M."/>
            <person name="Paule C.R."/>
            <person name="Poulain J."/>
            <person name="Prion F."/>
            <person name="Qin B."/>
            <person name="Qu C."/>
            <person name="Retzel E.F."/>
            <person name="Riddle C."/>
            <person name="Sallet E."/>
            <person name="Samain S."/>
            <person name="Samson N."/>
            <person name="Sanders I."/>
            <person name="Saurat O."/>
            <person name="Scarpelli C."/>
            <person name="Schiex T."/>
            <person name="Segurens B."/>
            <person name="Severin A.J."/>
            <person name="Sherrier D.J."/>
            <person name="Shi R."/>
            <person name="Sims S."/>
            <person name="Singer S.R."/>
            <person name="Sinharoy S."/>
            <person name="Sterck L."/>
            <person name="Viollet A."/>
            <person name="Wang B.-B."/>
            <person name="Wang K."/>
            <person name="Wang M."/>
            <person name="Wang X."/>
            <person name="Warfsmann J."/>
            <person name="Weissenbach J."/>
            <person name="White D.D."/>
            <person name="White J.D."/>
            <person name="Wiley G.B."/>
            <person name="Wincker P."/>
            <person name="Xing Y."/>
            <person name="Yang L."/>
            <person name="Yao Z."/>
            <person name="Ying F."/>
            <person name="Zhai J."/>
            <person name="Zhou L."/>
            <person name="Zuber A."/>
            <person name="Denarie J."/>
            <person name="Dixon R.A."/>
            <person name="May G.D."/>
            <person name="Schwartz D.C."/>
            <person name="Rogers J."/>
            <person name="Quetier F."/>
            <person name="Town C.D."/>
            <person name="Roe B.A."/>
        </authorList>
    </citation>
    <scope>NUCLEOTIDE SEQUENCE [LARGE SCALE GENOMIC DNA]</scope>
    <source>
        <strain>cv. Jemalong A17</strain>
    </source>
</reference>
<reference key="3">
    <citation type="journal article" date="2014" name="BMC Genomics">
        <title>An improved genome release (version Mt4.0) for the model legume Medicago truncatula.</title>
        <authorList>
            <person name="Tang H."/>
            <person name="Krishnakumar V."/>
            <person name="Bidwell S."/>
            <person name="Rosen B."/>
            <person name="Chan A."/>
            <person name="Zhou S."/>
            <person name="Gentzbittel L."/>
            <person name="Childs K.L."/>
            <person name="Yandell M."/>
            <person name="Gundlach H."/>
            <person name="Mayer K.F."/>
            <person name="Schwartz D.C."/>
            <person name="Town C.D."/>
        </authorList>
    </citation>
    <scope>GENOME REANNOTATION</scope>
    <source>
        <strain>cv. Jemalong A17</strain>
    </source>
</reference>
<proteinExistence type="evidence at transcript level"/>
<protein>
    <recommendedName>
        <fullName evidence="4">RNA-binding protein 2</fullName>
    </recommendedName>
</protein>
<sequence>MADGFWNRQQQHLPPPGGMLKRPRTEYDTAPSGVTSGNEVHNYIAQNNGHQMLNDTKILGSAYDRFLQSAGLTSFNSGEASVIGGVGFARGVGELPGHSLGDPSAMGHLSGVGGGPDLSRNGRDVNFGGQLPIDAVSRPGPETIPLPRDASSTLYVEGLPSDSTKREVAHIFRPFVGYREVRLVAKESKHRGGDPLILCFVDFANPACAATALSALQGYKVDEINPESSYLRLQFSRSPGRRSGGPGPRGKR</sequence>
<accession>G7ID19</accession>
<accession>I3SDS6</accession>
<gene>
    <name evidence="4" type="primary">RBP2</name>
    <name type="ordered locus">MTR_1g099190</name>
</gene>
<organism evidence="5">
    <name type="scientific">Medicago truncatula</name>
    <name type="common">Barrel medic</name>
    <name type="synonym">Medicago tribuloides</name>
    <dbReference type="NCBI Taxonomy" id="3880"/>
    <lineage>
        <taxon>Eukaryota</taxon>
        <taxon>Viridiplantae</taxon>
        <taxon>Streptophyta</taxon>
        <taxon>Embryophyta</taxon>
        <taxon>Tracheophyta</taxon>
        <taxon>Spermatophyta</taxon>
        <taxon>Magnoliopsida</taxon>
        <taxon>eudicotyledons</taxon>
        <taxon>Gunneridae</taxon>
        <taxon>Pentapetalae</taxon>
        <taxon>rosids</taxon>
        <taxon>fabids</taxon>
        <taxon>Fabales</taxon>
        <taxon>Fabaceae</taxon>
        <taxon>Papilionoideae</taxon>
        <taxon>50 kb inversion clade</taxon>
        <taxon>NPAAA clade</taxon>
        <taxon>Hologalegina</taxon>
        <taxon>IRL clade</taxon>
        <taxon>Trifolieae</taxon>
        <taxon>Medicago</taxon>
    </lineage>
</organism>
<keyword id="KW-1185">Reference proteome</keyword>
<keyword id="KW-0694">RNA-binding</keyword>
<name>RBP2_MEDTR</name>
<evidence type="ECO:0000250" key="1">
    <source>
        <dbReference type="UniProtKB" id="Q8H0P8"/>
    </source>
</evidence>
<evidence type="ECO:0000255" key="2">
    <source>
        <dbReference type="PROSITE-ProRule" id="PRU00176"/>
    </source>
</evidence>
<evidence type="ECO:0000256" key="3">
    <source>
        <dbReference type="SAM" id="MobiDB-lite"/>
    </source>
</evidence>
<evidence type="ECO:0000305" key="4"/>
<evidence type="ECO:0000312" key="5">
    <source>
        <dbReference type="Proteomes" id="UP000002051"/>
    </source>
</evidence>
<dbReference type="EMBL" id="BT138623">
    <property type="protein sequence ID" value="AFK38418.1"/>
    <property type="molecule type" value="mRNA"/>
</dbReference>
<dbReference type="EMBL" id="CM001217">
    <property type="protein sequence ID" value="AES62393.1"/>
    <property type="molecule type" value="Genomic_DNA"/>
</dbReference>
<dbReference type="RefSeq" id="XP_003592142.1">
    <property type="nucleotide sequence ID" value="XM_003592094.2"/>
</dbReference>
<dbReference type="SMR" id="G7ID19"/>
<dbReference type="PaxDb" id="3880-AES62393"/>
<dbReference type="EnsemblPlants" id="rna5795">
    <property type="protein sequence ID" value="RHN81713.1"/>
    <property type="gene ID" value="gene5795"/>
</dbReference>
<dbReference type="GeneID" id="11424149"/>
<dbReference type="Gramene" id="rna5795">
    <property type="protein sequence ID" value="RHN81713.1"/>
    <property type="gene ID" value="gene5795"/>
</dbReference>
<dbReference type="KEGG" id="mtr:11424149"/>
<dbReference type="eggNOG" id="ENOG502QVUV">
    <property type="taxonomic scope" value="Eukaryota"/>
</dbReference>
<dbReference type="HOGENOM" id="CLU_078642_1_0_1"/>
<dbReference type="OMA" id="HVAGMGR"/>
<dbReference type="OrthoDB" id="431169at2759"/>
<dbReference type="Proteomes" id="UP000002051">
    <property type="component" value="Chromosome 1"/>
</dbReference>
<dbReference type="GO" id="GO:0003729">
    <property type="term" value="F:mRNA binding"/>
    <property type="evidence" value="ECO:0000318"/>
    <property type="project" value="GO_Central"/>
</dbReference>
<dbReference type="CDD" id="cd21618">
    <property type="entry name" value="RRM_AtNSRA_like"/>
    <property type="match status" value="1"/>
</dbReference>
<dbReference type="Gene3D" id="3.30.70.330">
    <property type="match status" value="1"/>
</dbReference>
<dbReference type="InterPro" id="IPR012677">
    <property type="entry name" value="Nucleotide-bd_a/b_plait_sf"/>
</dbReference>
<dbReference type="InterPro" id="IPR035979">
    <property type="entry name" value="RBD_domain_sf"/>
</dbReference>
<dbReference type="InterPro" id="IPR000504">
    <property type="entry name" value="RRM_dom"/>
</dbReference>
<dbReference type="PANTHER" id="PTHR10501">
    <property type="entry name" value="U1 SMALL NUCLEAR RIBONUCLEOPROTEIN A/U2 SMALL NUCLEAR RIBONUCLEOPROTEIN B"/>
    <property type="match status" value="1"/>
</dbReference>
<dbReference type="Pfam" id="PF00076">
    <property type="entry name" value="RRM_1"/>
    <property type="match status" value="1"/>
</dbReference>
<dbReference type="SMART" id="SM00360">
    <property type="entry name" value="RRM"/>
    <property type="match status" value="1"/>
</dbReference>
<dbReference type="SUPFAM" id="SSF54928">
    <property type="entry name" value="RNA-binding domain, RBD"/>
    <property type="match status" value="1"/>
</dbReference>
<dbReference type="PROSITE" id="PS50102">
    <property type="entry name" value="RRM"/>
    <property type="match status" value="1"/>
</dbReference>
<feature type="chain" id="PRO_0000434145" description="RNA-binding protein 2">
    <location>
        <begin position="1"/>
        <end position="252"/>
    </location>
</feature>
<feature type="domain" description="RRM" evidence="2">
    <location>
        <begin position="152"/>
        <end position="238"/>
    </location>
</feature>
<feature type="region of interest" description="Disordered" evidence="3">
    <location>
        <begin position="1"/>
        <end position="34"/>
    </location>
</feature>
<feature type="region of interest" description="Disordered" evidence="3">
    <location>
        <begin position="232"/>
        <end position="252"/>
    </location>
</feature>
<feature type="compositionally biased region" description="Gly residues" evidence="3">
    <location>
        <begin position="242"/>
        <end position="252"/>
    </location>
</feature>
<feature type="sequence conflict" description="In Ref. 1; AFK38418." evidence="4" ref="1">
    <original>V</original>
    <variation>A</variation>
    <location>
        <position position="125"/>
    </location>
</feature>
<comment type="function">
    <text evidence="1">Probable RNA-binding protein.</text>
</comment>